<feature type="chain" id="PRO_1000114867" description="Phenylalanine--tRNA ligase alpha subunit">
    <location>
        <begin position="1"/>
        <end position="334"/>
    </location>
</feature>
<feature type="binding site" evidence="1">
    <location>
        <position position="249"/>
    </location>
    <ligand>
        <name>Mg(2+)</name>
        <dbReference type="ChEBI" id="CHEBI:18420"/>
        <note>shared with beta subunit</note>
    </ligand>
</feature>
<proteinExistence type="inferred from homology"/>
<dbReference type="EC" id="6.1.1.20" evidence="1"/>
<dbReference type="EMBL" id="CP000859">
    <property type="protein sequence ID" value="ABW68843.1"/>
    <property type="molecule type" value="Genomic_DNA"/>
</dbReference>
<dbReference type="RefSeq" id="WP_012176454.1">
    <property type="nucleotide sequence ID" value="NC_009943.1"/>
</dbReference>
<dbReference type="SMR" id="A8ZZ70"/>
<dbReference type="STRING" id="96561.Dole_3040"/>
<dbReference type="KEGG" id="dol:Dole_3040"/>
<dbReference type="eggNOG" id="COG0016">
    <property type="taxonomic scope" value="Bacteria"/>
</dbReference>
<dbReference type="HOGENOM" id="CLU_025086_0_1_7"/>
<dbReference type="OrthoDB" id="9800719at2"/>
<dbReference type="Proteomes" id="UP000008561">
    <property type="component" value="Chromosome"/>
</dbReference>
<dbReference type="GO" id="GO:0005737">
    <property type="term" value="C:cytoplasm"/>
    <property type="evidence" value="ECO:0007669"/>
    <property type="project" value="UniProtKB-SubCell"/>
</dbReference>
<dbReference type="GO" id="GO:0005524">
    <property type="term" value="F:ATP binding"/>
    <property type="evidence" value="ECO:0007669"/>
    <property type="project" value="UniProtKB-UniRule"/>
</dbReference>
<dbReference type="GO" id="GO:0000287">
    <property type="term" value="F:magnesium ion binding"/>
    <property type="evidence" value="ECO:0007669"/>
    <property type="project" value="UniProtKB-UniRule"/>
</dbReference>
<dbReference type="GO" id="GO:0004826">
    <property type="term" value="F:phenylalanine-tRNA ligase activity"/>
    <property type="evidence" value="ECO:0007669"/>
    <property type="project" value="UniProtKB-UniRule"/>
</dbReference>
<dbReference type="GO" id="GO:0000049">
    <property type="term" value="F:tRNA binding"/>
    <property type="evidence" value="ECO:0007669"/>
    <property type="project" value="InterPro"/>
</dbReference>
<dbReference type="GO" id="GO:0006432">
    <property type="term" value="P:phenylalanyl-tRNA aminoacylation"/>
    <property type="evidence" value="ECO:0007669"/>
    <property type="project" value="UniProtKB-UniRule"/>
</dbReference>
<dbReference type="CDD" id="cd00496">
    <property type="entry name" value="PheRS_alpha_core"/>
    <property type="match status" value="1"/>
</dbReference>
<dbReference type="FunFam" id="3.30.930.10:FF:000003">
    <property type="entry name" value="Phenylalanine--tRNA ligase alpha subunit"/>
    <property type="match status" value="1"/>
</dbReference>
<dbReference type="Gene3D" id="3.30.930.10">
    <property type="entry name" value="Bira Bifunctional Protein, Domain 2"/>
    <property type="match status" value="1"/>
</dbReference>
<dbReference type="HAMAP" id="MF_00281">
    <property type="entry name" value="Phe_tRNA_synth_alpha1"/>
    <property type="match status" value="1"/>
</dbReference>
<dbReference type="InterPro" id="IPR006195">
    <property type="entry name" value="aa-tRNA-synth_II"/>
</dbReference>
<dbReference type="InterPro" id="IPR045864">
    <property type="entry name" value="aa-tRNA-synth_II/BPL/LPL"/>
</dbReference>
<dbReference type="InterPro" id="IPR004529">
    <property type="entry name" value="Phe-tRNA-synth_IIc_asu"/>
</dbReference>
<dbReference type="InterPro" id="IPR004188">
    <property type="entry name" value="Phe-tRNA_ligase_II_N"/>
</dbReference>
<dbReference type="InterPro" id="IPR022911">
    <property type="entry name" value="Phe_tRNA_ligase_alpha1_bac"/>
</dbReference>
<dbReference type="InterPro" id="IPR002319">
    <property type="entry name" value="Phenylalanyl-tRNA_Synthase"/>
</dbReference>
<dbReference type="InterPro" id="IPR010978">
    <property type="entry name" value="tRNA-bd_arm"/>
</dbReference>
<dbReference type="NCBIfam" id="TIGR00468">
    <property type="entry name" value="pheS"/>
    <property type="match status" value="1"/>
</dbReference>
<dbReference type="PANTHER" id="PTHR11538:SF41">
    <property type="entry name" value="PHENYLALANINE--TRNA LIGASE, MITOCHONDRIAL"/>
    <property type="match status" value="1"/>
</dbReference>
<dbReference type="PANTHER" id="PTHR11538">
    <property type="entry name" value="PHENYLALANYL-TRNA SYNTHETASE"/>
    <property type="match status" value="1"/>
</dbReference>
<dbReference type="Pfam" id="PF02912">
    <property type="entry name" value="Phe_tRNA-synt_N"/>
    <property type="match status" value="1"/>
</dbReference>
<dbReference type="Pfam" id="PF01409">
    <property type="entry name" value="tRNA-synt_2d"/>
    <property type="match status" value="1"/>
</dbReference>
<dbReference type="SUPFAM" id="SSF55681">
    <property type="entry name" value="Class II aaRS and biotin synthetases"/>
    <property type="match status" value="1"/>
</dbReference>
<dbReference type="SUPFAM" id="SSF46589">
    <property type="entry name" value="tRNA-binding arm"/>
    <property type="match status" value="1"/>
</dbReference>
<dbReference type="PROSITE" id="PS50862">
    <property type="entry name" value="AA_TRNA_LIGASE_II"/>
    <property type="match status" value="1"/>
</dbReference>
<protein>
    <recommendedName>
        <fullName evidence="1">Phenylalanine--tRNA ligase alpha subunit</fullName>
        <ecNumber evidence="1">6.1.1.20</ecNumber>
    </recommendedName>
    <alternativeName>
        <fullName evidence="1">Phenylalanyl-tRNA synthetase alpha subunit</fullName>
        <shortName evidence="1">PheRS</shortName>
    </alternativeName>
</protein>
<gene>
    <name evidence="1" type="primary">pheS</name>
    <name type="ordered locus">Dole_3040</name>
</gene>
<comment type="catalytic activity">
    <reaction evidence="1">
        <text>tRNA(Phe) + L-phenylalanine + ATP = L-phenylalanyl-tRNA(Phe) + AMP + diphosphate + H(+)</text>
        <dbReference type="Rhea" id="RHEA:19413"/>
        <dbReference type="Rhea" id="RHEA-COMP:9668"/>
        <dbReference type="Rhea" id="RHEA-COMP:9699"/>
        <dbReference type="ChEBI" id="CHEBI:15378"/>
        <dbReference type="ChEBI" id="CHEBI:30616"/>
        <dbReference type="ChEBI" id="CHEBI:33019"/>
        <dbReference type="ChEBI" id="CHEBI:58095"/>
        <dbReference type="ChEBI" id="CHEBI:78442"/>
        <dbReference type="ChEBI" id="CHEBI:78531"/>
        <dbReference type="ChEBI" id="CHEBI:456215"/>
        <dbReference type="EC" id="6.1.1.20"/>
    </reaction>
</comment>
<comment type="cofactor">
    <cofactor evidence="1">
        <name>Mg(2+)</name>
        <dbReference type="ChEBI" id="CHEBI:18420"/>
    </cofactor>
    <text evidence="1">Binds 2 magnesium ions per tetramer.</text>
</comment>
<comment type="subunit">
    <text evidence="1">Tetramer of two alpha and two beta subunits.</text>
</comment>
<comment type="subcellular location">
    <subcellularLocation>
        <location evidence="1">Cytoplasm</location>
    </subcellularLocation>
</comment>
<comment type="similarity">
    <text evidence="1">Belongs to the class-II aminoacyl-tRNA synthetase family. Phe-tRNA synthetase alpha subunit type 1 subfamily.</text>
</comment>
<accession>A8ZZ70</accession>
<name>SYFA_DESOH</name>
<keyword id="KW-0030">Aminoacyl-tRNA synthetase</keyword>
<keyword id="KW-0067">ATP-binding</keyword>
<keyword id="KW-0963">Cytoplasm</keyword>
<keyword id="KW-0436">Ligase</keyword>
<keyword id="KW-0460">Magnesium</keyword>
<keyword id="KW-0479">Metal-binding</keyword>
<keyword id="KW-0547">Nucleotide-binding</keyword>
<keyword id="KW-0648">Protein biosynthesis</keyword>
<keyword id="KW-1185">Reference proteome</keyword>
<sequence>MTESLDGIKERALREIASARDTETLQSVSVKYLGRKGAVTLFLRNLSQLPAEERPRAGQAANQVKQDLQAALDRATEQIAADSAAVDGIDVSLPGRPVSRGTLHPITRITRRICEIFGRMGFDVVEGPEIETDYYNFEALNIPKHHPARDMQDTFYISDNVVLRTHTSPTQPRVMEKTAPPLRIIAPGKVYRCDSDVTHTPMFHQVEGLMVDRNVSFGDLKGILTLFIHRMFDPETSLRFRPSYFPFTEPSAEVDIRCVACRGKGCRICSHTGWLEILGAGMVHPAVFEKAGYDTQAYTGFAFGMGVERIAMLKYNIDDTRKFFENDTRFLRQF</sequence>
<reference key="1">
    <citation type="submission" date="2007-10" db="EMBL/GenBank/DDBJ databases">
        <title>Complete sequence of Desulfococcus oleovorans Hxd3.</title>
        <authorList>
            <consortium name="US DOE Joint Genome Institute"/>
            <person name="Copeland A."/>
            <person name="Lucas S."/>
            <person name="Lapidus A."/>
            <person name="Barry K."/>
            <person name="Glavina del Rio T."/>
            <person name="Dalin E."/>
            <person name="Tice H."/>
            <person name="Pitluck S."/>
            <person name="Kiss H."/>
            <person name="Brettin T."/>
            <person name="Bruce D."/>
            <person name="Detter J.C."/>
            <person name="Han C."/>
            <person name="Schmutz J."/>
            <person name="Larimer F."/>
            <person name="Land M."/>
            <person name="Hauser L."/>
            <person name="Kyrpides N."/>
            <person name="Kim E."/>
            <person name="Wawrik B."/>
            <person name="Richardson P."/>
        </authorList>
    </citation>
    <scope>NUCLEOTIDE SEQUENCE [LARGE SCALE GENOMIC DNA]</scope>
    <source>
        <strain>DSM 6200 / JCM 39069 / Hxd3</strain>
    </source>
</reference>
<evidence type="ECO:0000255" key="1">
    <source>
        <dbReference type="HAMAP-Rule" id="MF_00281"/>
    </source>
</evidence>
<organism>
    <name type="scientific">Desulfosudis oleivorans (strain DSM 6200 / JCM 39069 / Hxd3)</name>
    <name type="common">Desulfococcus oleovorans</name>
    <dbReference type="NCBI Taxonomy" id="96561"/>
    <lineage>
        <taxon>Bacteria</taxon>
        <taxon>Pseudomonadati</taxon>
        <taxon>Thermodesulfobacteriota</taxon>
        <taxon>Desulfobacteria</taxon>
        <taxon>Desulfobacterales</taxon>
        <taxon>Desulfosudaceae</taxon>
        <taxon>Desulfosudis</taxon>
    </lineage>
</organism>